<keyword id="KW-0010">Activator</keyword>
<keyword id="KW-0539">Nucleus</keyword>
<keyword id="KW-1185">Reference proteome</keyword>
<keyword id="KW-0804">Transcription</keyword>
<keyword id="KW-0805">Transcription regulation</keyword>
<protein>
    <recommendedName>
        <fullName>Mediator of RNA polymerase II transcription subunit 10</fullName>
    </recommendedName>
    <alternativeName>
        <fullName>Mediator complex subunit 10</fullName>
    </alternativeName>
</protein>
<name>MED10_MYCMD</name>
<gene>
    <name type="primary">NUT2</name>
    <name type="synonym">MED10</name>
    <name type="ORF">UMAG_01906</name>
</gene>
<feature type="chain" id="PRO_0000303177" description="Mediator of RNA polymerase II transcription subunit 10">
    <location>
        <begin position="1"/>
        <end position="197"/>
    </location>
</feature>
<feature type="region of interest" description="Disordered" evidence="2">
    <location>
        <begin position="1"/>
        <end position="39"/>
    </location>
</feature>
<feature type="compositionally biased region" description="Polar residues" evidence="2">
    <location>
        <begin position="27"/>
        <end position="37"/>
    </location>
</feature>
<reference key="1">
    <citation type="journal article" date="2006" name="Nature">
        <title>Insights from the genome of the biotrophic fungal plant pathogen Ustilago maydis.</title>
        <authorList>
            <person name="Kaemper J."/>
            <person name="Kahmann R."/>
            <person name="Boelker M."/>
            <person name="Ma L.-J."/>
            <person name="Brefort T."/>
            <person name="Saville B.J."/>
            <person name="Banuett F."/>
            <person name="Kronstad J.W."/>
            <person name="Gold S.E."/>
            <person name="Mueller O."/>
            <person name="Perlin M.H."/>
            <person name="Woesten H.A.B."/>
            <person name="de Vries R."/>
            <person name="Ruiz-Herrera J."/>
            <person name="Reynaga-Pena C.G."/>
            <person name="Snetselaar K."/>
            <person name="McCann M."/>
            <person name="Perez-Martin J."/>
            <person name="Feldbruegge M."/>
            <person name="Basse C.W."/>
            <person name="Steinberg G."/>
            <person name="Ibeas J.I."/>
            <person name="Holloman W."/>
            <person name="Guzman P."/>
            <person name="Farman M.L."/>
            <person name="Stajich J.E."/>
            <person name="Sentandreu R."/>
            <person name="Gonzalez-Prieto J.M."/>
            <person name="Kennell J.C."/>
            <person name="Molina L."/>
            <person name="Schirawski J."/>
            <person name="Mendoza-Mendoza A."/>
            <person name="Greilinger D."/>
            <person name="Muench K."/>
            <person name="Roessel N."/>
            <person name="Scherer M."/>
            <person name="Vranes M."/>
            <person name="Ladendorf O."/>
            <person name="Vincon V."/>
            <person name="Fuchs U."/>
            <person name="Sandrock B."/>
            <person name="Meng S."/>
            <person name="Ho E.C.H."/>
            <person name="Cahill M.J."/>
            <person name="Boyce K.J."/>
            <person name="Klose J."/>
            <person name="Klosterman S.J."/>
            <person name="Deelstra H.J."/>
            <person name="Ortiz-Castellanos L."/>
            <person name="Li W."/>
            <person name="Sanchez-Alonso P."/>
            <person name="Schreier P.H."/>
            <person name="Haeuser-Hahn I."/>
            <person name="Vaupel M."/>
            <person name="Koopmann E."/>
            <person name="Friedrich G."/>
            <person name="Voss H."/>
            <person name="Schlueter T."/>
            <person name="Margolis J."/>
            <person name="Platt D."/>
            <person name="Swimmer C."/>
            <person name="Gnirke A."/>
            <person name="Chen F."/>
            <person name="Vysotskaia V."/>
            <person name="Mannhaupt G."/>
            <person name="Gueldener U."/>
            <person name="Muensterkoetter M."/>
            <person name="Haase D."/>
            <person name="Oesterheld M."/>
            <person name="Mewes H.-W."/>
            <person name="Mauceli E.W."/>
            <person name="DeCaprio D."/>
            <person name="Wade C.M."/>
            <person name="Butler J."/>
            <person name="Young S.K."/>
            <person name="Jaffe D.B."/>
            <person name="Calvo S.E."/>
            <person name="Nusbaum C."/>
            <person name="Galagan J.E."/>
            <person name="Birren B.W."/>
        </authorList>
    </citation>
    <scope>NUCLEOTIDE SEQUENCE [LARGE SCALE GENOMIC DNA]</scope>
    <source>
        <strain>DSM 14603 / FGSC 9021 / UM521</strain>
    </source>
</reference>
<reference key="2">
    <citation type="submission" date="2014-09" db="EMBL/GenBank/DDBJ databases">
        <authorList>
            <person name="Gueldener U."/>
            <person name="Muensterkoetter M."/>
            <person name="Walter M.C."/>
            <person name="Mannhaupt G."/>
            <person name="Kahmann R."/>
        </authorList>
    </citation>
    <scope>GENOME REANNOTATION</scope>
    <source>
        <strain>DSM 14603 / FGSC 9021 / UM521</strain>
    </source>
</reference>
<accession>Q4PDA7</accession>
<accession>A0A0D1E4X8</accession>
<proteinExistence type="inferred from homology"/>
<comment type="function">
    <text evidence="1">Component of the Mediator complex, a coactivator involved in the regulated transcription of nearly all RNA polymerase II-dependent genes. Mediator functions as a bridge to convey information from gene-specific regulatory proteins to the basal RNA polymerase II transcription machinery. Mediator is recruited to promoters by direct interactions with regulatory proteins and serves as a scaffold for the assembly of a functional preinitiation complex with RNA polymerase II and the general transcription factors (By similarity).</text>
</comment>
<comment type="subunit">
    <text evidence="1">Component of the Mediator complex.</text>
</comment>
<comment type="subcellular location">
    <subcellularLocation>
        <location evidence="1">Nucleus</location>
    </subcellularLocation>
</comment>
<comment type="similarity">
    <text evidence="3">Belongs to the Mediator complex subunit 10 family.</text>
</comment>
<sequence>MSSTAGTRRPRQITPTSPSPSPEPQPGATNGSSSTINVAVPSASAPAQVAPSQVAAAAATPVDAAEAVRINLETRVRSVVDLLYQLAVCSADVQEGSQHLVANKVNECIQALAALDATKDELHRAHMMIPQDVLEMLDTGKNPDIHTRNFVNRLASENQYSYGQHRAVERYKATLDAALDQAFPELKAAQAESTETK</sequence>
<dbReference type="EMBL" id="CM003142">
    <property type="protein sequence ID" value="KIS70751.1"/>
    <property type="molecule type" value="Genomic_DNA"/>
</dbReference>
<dbReference type="RefSeq" id="XP_011387837.1">
    <property type="nucleotide sequence ID" value="XM_011389535.1"/>
</dbReference>
<dbReference type="SMR" id="Q4PDA7"/>
<dbReference type="FunCoup" id="Q4PDA7">
    <property type="interactions" value="347"/>
</dbReference>
<dbReference type="STRING" id="237631.Q4PDA7"/>
<dbReference type="EnsemblFungi" id="KIS70751">
    <property type="protein sequence ID" value="KIS70751"/>
    <property type="gene ID" value="UMAG_01906"/>
</dbReference>
<dbReference type="GeneID" id="23562783"/>
<dbReference type="KEGG" id="uma:UMAG_01906"/>
<dbReference type="VEuPathDB" id="FungiDB:UMAG_01906"/>
<dbReference type="eggNOG" id="KOG3046">
    <property type="taxonomic scope" value="Eukaryota"/>
</dbReference>
<dbReference type="HOGENOM" id="CLU_099135_0_0_1"/>
<dbReference type="InParanoid" id="Q4PDA7"/>
<dbReference type="OMA" id="SGNTHAF"/>
<dbReference type="OrthoDB" id="337270at2759"/>
<dbReference type="Proteomes" id="UP000000561">
    <property type="component" value="Chromosome 3"/>
</dbReference>
<dbReference type="GO" id="GO:0016592">
    <property type="term" value="C:mediator complex"/>
    <property type="evidence" value="ECO:0007669"/>
    <property type="project" value="InterPro"/>
</dbReference>
<dbReference type="GO" id="GO:0003712">
    <property type="term" value="F:transcription coregulator activity"/>
    <property type="evidence" value="ECO:0007669"/>
    <property type="project" value="InterPro"/>
</dbReference>
<dbReference type="GO" id="GO:0006357">
    <property type="term" value="P:regulation of transcription by RNA polymerase II"/>
    <property type="evidence" value="ECO:0007669"/>
    <property type="project" value="InterPro"/>
</dbReference>
<dbReference type="InterPro" id="IPR019145">
    <property type="entry name" value="Mediator_Med10"/>
</dbReference>
<dbReference type="Pfam" id="PF09748">
    <property type="entry name" value="Med10"/>
    <property type="match status" value="1"/>
</dbReference>
<organism>
    <name type="scientific">Mycosarcoma maydis</name>
    <name type="common">Corn smut fungus</name>
    <name type="synonym">Ustilago maydis</name>
    <dbReference type="NCBI Taxonomy" id="5270"/>
    <lineage>
        <taxon>Eukaryota</taxon>
        <taxon>Fungi</taxon>
        <taxon>Dikarya</taxon>
        <taxon>Basidiomycota</taxon>
        <taxon>Ustilaginomycotina</taxon>
        <taxon>Ustilaginomycetes</taxon>
        <taxon>Ustilaginales</taxon>
        <taxon>Ustilaginaceae</taxon>
        <taxon>Mycosarcoma</taxon>
    </lineage>
</organism>
<evidence type="ECO:0000250" key="1"/>
<evidence type="ECO:0000256" key="2">
    <source>
        <dbReference type="SAM" id="MobiDB-lite"/>
    </source>
</evidence>
<evidence type="ECO:0000305" key="3"/>